<protein>
    <recommendedName>
        <fullName evidence="1">Recombination protein RecR</fullName>
    </recommendedName>
</protein>
<dbReference type="EMBL" id="AE016853">
    <property type="protein sequence ID" value="AAO57109.1"/>
    <property type="molecule type" value="Genomic_DNA"/>
</dbReference>
<dbReference type="RefSeq" id="NP_793414.1">
    <property type="nucleotide sequence ID" value="NC_004578.1"/>
</dbReference>
<dbReference type="RefSeq" id="WP_011104642.1">
    <property type="nucleotide sequence ID" value="NC_004578.1"/>
</dbReference>
<dbReference type="SMR" id="Q87Z00"/>
<dbReference type="STRING" id="223283.PSPTO_3638"/>
<dbReference type="GeneID" id="1185303"/>
<dbReference type="KEGG" id="pst:PSPTO_3638"/>
<dbReference type="PATRIC" id="fig|223283.9.peg.3726"/>
<dbReference type="eggNOG" id="COG0353">
    <property type="taxonomic scope" value="Bacteria"/>
</dbReference>
<dbReference type="HOGENOM" id="CLU_060739_1_2_6"/>
<dbReference type="OrthoDB" id="9802672at2"/>
<dbReference type="PhylomeDB" id="Q87Z00"/>
<dbReference type="Proteomes" id="UP000002515">
    <property type="component" value="Chromosome"/>
</dbReference>
<dbReference type="GO" id="GO:0003677">
    <property type="term" value="F:DNA binding"/>
    <property type="evidence" value="ECO:0007669"/>
    <property type="project" value="UniProtKB-UniRule"/>
</dbReference>
<dbReference type="GO" id="GO:0008270">
    <property type="term" value="F:zinc ion binding"/>
    <property type="evidence" value="ECO:0007669"/>
    <property type="project" value="UniProtKB-KW"/>
</dbReference>
<dbReference type="GO" id="GO:0006310">
    <property type="term" value="P:DNA recombination"/>
    <property type="evidence" value="ECO:0007669"/>
    <property type="project" value="UniProtKB-UniRule"/>
</dbReference>
<dbReference type="GO" id="GO:0006281">
    <property type="term" value="P:DNA repair"/>
    <property type="evidence" value="ECO:0007669"/>
    <property type="project" value="UniProtKB-UniRule"/>
</dbReference>
<dbReference type="CDD" id="cd01025">
    <property type="entry name" value="TOPRIM_recR"/>
    <property type="match status" value="1"/>
</dbReference>
<dbReference type="Gene3D" id="3.40.1360.10">
    <property type="match status" value="1"/>
</dbReference>
<dbReference type="Gene3D" id="6.10.250.240">
    <property type="match status" value="1"/>
</dbReference>
<dbReference type="Gene3D" id="1.10.8.420">
    <property type="entry name" value="RecR Domain 1"/>
    <property type="match status" value="1"/>
</dbReference>
<dbReference type="HAMAP" id="MF_00017">
    <property type="entry name" value="RecR"/>
    <property type="match status" value="1"/>
</dbReference>
<dbReference type="InterPro" id="IPR000093">
    <property type="entry name" value="DNA_Rcmb_RecR"/>
</dbReference>
<dbReference type="InterPro" id="IPR023627">
    <property type="entry name" value="Rcmb_RecR"/>
</dbReference>
<dbReference type="InterPro" id="IPR015967">
    <property type="entry name" value="Rcmb_RecR_Znf"/>
</dbReference>
<dbReference type="InterPro" id="IPR006171">
    <property type="entry name" value="TOPRIM_dom"/>
</dbReference>
<dbReference type="InterPro" id="IPR034137">
    <property type="entry name" value="TOPRIM_RecR"/>
</dbReference>
<dbReference type="NCBIfam" id="TIGR00615">
    <property type="entry name" value="recR"/>
    <property type="match status" value="1"/>
</dbReference>
<dbReference type="PANTHER" id="PTHR30446">
    <property type="entry name" value="RECOMBINATION PROTEIN RECR"/>
    <property type="match status" value="1"/>
</dbReference>
<dbReference type="PANTHER" id="PTHR30446:SF0">
    <property type="entry name" value="RECOMBINATION PROTEIN RECR"/>
    <property type="match status" value="1"/>
</dbReference>
<dbReference type="Pfam" id="PF21175">
    <property type="entry name" value="RecR_C"/>
    <property type="match status" value="1"/>
</dbReference>
<dbReference type="Pfam" id="PF21176">
    <property type="entry name" value="RecR_HhH"/>
    <property type="match status" value="1"/>
</dbReference>
<dbReference type="Pfam" id="PF02132">
    <property type="entry name" value="RecR_ZnF"/>
    <property type="match status" value="1"/>
</dbReference>
<dbReference type="Pfam" id="PF13662">
    <property type="entry name" value="Toprim_4"/>
    <property type="match status" value="1"/>
</dbReference>
<dbReference type="SMART" id="SM00493">
    <property type="entry name" value="TOPRIM"/>
    <property type="match status" value="1"/>
</dbReference>
<dbReference type="SUPFAM" id="SSF111304">
    <property type="entry name" value="Recombination protein RecR"/>
    <property type="match status" value="1"/>
</dbReference>
<dbReference type="PROSITE" id="PS01300">
    <property type="entry name" value="RECR"/>
    <property type="match status" value="1"/>
</dbReference>
<dbReference type="PROSITE" id="PS50880">
    <property type="entry name" value="TOPRIM"/>
    <property type="match status" value="1"/>
</dbReference>
<name>RECR_PSESM</name>
<accession>Q87Z00</accession>
<gene>
    <name evidence="1" type="primary">recR</name>
    <name type="ordered locus">PSPTO_3638</name>
</gene>
<organism>
    <name type="scientific">Pseudomonas syringae pv. tomato (strain ATCC BAA-871 / DC3000)</name>
    <dbReference type="NCBI Taxonomy" id="223283"/>
    <lineage>
        <taxon>Bacteria</taxon>
        <taxon>Pseudomonadati</taxon>
        <taxon>Pseudomonadota</taxon>
        <taxon>Gammaproteobacteria</taxon>
        <taxon>Pseudomonadales</taxon>
        <taxon>Pseudomonadaceae</taxon>
        <taxon>Pseudomonas</taxon>
    </lineage>
</organism>
<evidence type="ECO:0000255" key="1">
    <source>
        <dbReference type="HAMAP-Rule" id="MF_00017"/>
    </source>
</evidence>
<keyword id="KW-0227">DNA damage</keyword>
<keyword id="KW-0233">DNA recombination</keyword>
<keyword id="KW-0234">DNA repair</keyword>
<keyword id="KW-0479">Metal-binding</keyword>
<keyword id="KW-1185">Reference proteome</keyword>
<keyword id="KW-0862">Zinc</keyword>
<keyword id="KW-0863">Zinc-finger</keyword>
<comment type="function">
    <text evidence="1">May play a role in DNA repair. It seems to be involved in an RecBC-independent recombinational process of DNA repair. It may act with RecF and RecO.</text>
</comment>
<comment type="similarity">
    <text evidence="1">Belongs to the RecR family.</text>
</comment>
<proteinExistence type="inferred from homology"/>
<reference key="1">
    <citation type="journal article" date="2003" name="Proc. Natl. Acad. Sci. U.S.A.">
        <title>The complete genome sequence of the Arabidopsis and tomato pathogen Pseudomonas syringae pv. tomato DC3000.</title>
        <authorList>
            <person name="Buell C.R."/>
            <person name="Joardar V."/>
            <person name="Lindeberg M."/>
            <person name="Selengut J."/>
            <person name="Paulsen I.T."/>
            <person name="Gwinn M.L."/>
            <person name="Dodson R.J."/>
            <person name="DeBoy R.T."/>
            <person name="Durkin A.S."/>
            <person name="Kolonay J.F."/>
            <person name="Madupu R."/>
            <person name="Daugherty S.C."/>
            <person name="Brinkac L.M."/>
            <person name="Beanan M.J."/>
            <person name="Haft D.H."/>
            <person name="Nelson W.C."/>
            <person name="Davidsen T.M."/>
            <person name="Zafar N."/>
            <person name="Zhou L."/>
            <person name="Liu J."/>
            <person name="Yuan Q."/>
            <person name="Khouri H.M."/>
            <person name="Fedorova N.B."/>
            <person name="Tran B."/>
            <person name="Russell D."/>
            <person name="Berry K.J."/>
            <person name="Utterback T.R."/>
            <person name="Van Aken S.E."/>
            <person name="Feldblyum T.V."/>
            <person name="D'Ascenzo M."/>
            <person name="Deng W.-L."/>
            <person name="Ramos A.R."/>
            <person name="Alfano J.R."/>
            <person name="Cartinhour S."/>
            <person name="Chatterjee A.K."/>
            <person name="Delaney T.P."/>
            <person name="Lazarowitz S.G."/>
            <person name="Martin G.B."/>
            <person name="Schneider D.J."/>
            <person name="Tang X."/>
            <person name="Bender C.L."/>
            <person name="White O."/>
            <person name="Fraser C.M."/>
            <person name="Collmer A."/>
        </authorList>
    </citation>
    <scope>NUCLEOTIDE SEQUENCE [LARGE SCALE GENOMIC DNA]</scope>
    <source>
        <strain>ATCC BAA-871 / DC3000</strain>
    </source>
</reference>
<feature type="chain" id="PRO_0000190368" description="Recombination protein RecR">
    <location>
        <begin position="1"/>
        <end position="200"/>
    </location>
</feature>
<feature type="domain" description="Toprim" evidence="1">
    <location>
        <begin position="80"/>
        <end position="175"/>
    </location>
</feature>
<feature type="zinc finger region" description="C4-type" evidence="1">
    <location>
        <begin position="57"/>
        <end position="72"/>
    </location>
</feature>
<sequence>MSFSPLIRQLIDAFRVLPGVGQKTAQRMALQLLERDRSGGSRLALALGQAMDGVGHCRLCRTLTEEELCPQCSDLRRNDTLLCVVEGPTDVYAVEQTGYRGRYFVLKGHLSPLDGLGPEAIGIPQLMERISQQATFTEVILATNPTVEGEATAHYIAQLLHDKGLVASRIAHGVPLGGELDLVDGGTLAHSFAGRKPIAL</sequence>